<reference key="1">
    <citation type="submission" date="2007-10" db="EMBL/GenBank/DDBJ databases">
        <title>Complete sequence of chromosome of Desulforudis audaxviator MP104C.</title>
        <authorList>
            <person name="Copeland A."/>
            <person name="Lucas S."/>
            <person name="Lapidus A."/>
            <person name="Barry K."/>
            <person name="Glavina del Rio T."/>
            <person name="Dalin E."/>
            <person name="Tice H."/>
            <person name="Bruce D."/>
            <person name="Pitluck S."/>
            <person name="Lowry S.R."/>
            <person name="Larimer F."/>
            <person name="Land M.L."/>
            <person name="Hauser L."/>
            <person name="Kyrpides N."/>
            <person name="Ivanova N.N."/>
            <person name="Richardson P."/>
        </authorList>
    </citation>
    <scope>NUCLEOTIDE SEQUENCE [LARGE SCALE GENOMIC DNA]</scope>
    <source>
        <strain>MP104C</strain>
    </source>
</reference>
<dbReference type="EC" id="2.7.7.60" evidence="1"/>
<dbReference type="EC" id="4.6.1.12" evidence="1"/>
<dbReference type="EMBL" id="CP000860">
    <property type="protein sequence ID" value="ACA58750.1"/>
    <property type="molecule type" value="Genomic_DNA"/>
</dbReference>
<dbReference type="RefSeq" id="WP_012301343.1">
    <property type="nucleotide sequence ID" value="NC_010424.1"/>
</dbReference>
<dbReference type="SMR" id="B1I0S9"/>
<dbReference type="STRING" id="477974.Daud_0186"/>
<dbReference type="KEGG" id="dau:Daud_0186"/>
<dbReference type="eggNOG" id="COG0245">
    <property type="taxonomic scope" value="Bacteria"/>
</dbReference>
<dbReference type="eggNOG" id="COG1211">
    <property type="taxonomic scope" value="Bacteria"/>
</dbReference>
<dbReference type="HOGENOM" id="CLU_042800_2_4_9"/>
<dbReference type="OrthoDB" id="9806837at2"/>
<dbReference type="UniPathway" id="UPA00056">
    <property type="reaction ID" value="UER00093"/>
</dbReference>
<dbReference type="UniPathway" id="UPA00056">
    <property type="reaction ID" value="UER00095"/>
</dbReference>
<dbReference type="Proteomes" id="UP000008544">
    <property type="component" value="Chromosome"/>
</dbReference>
<dbReference type="GO" id="GO:0008685">
    <property type="term" value="F:2-C-methyl-D-erythritol 2,4-cyclodiphosphate synthase activity"/>
    <property type="evidence" value="ECO:0007669"/>
    <property type="project" value="UniProtKB-UniRule"/>
</dbReference>
<dbReference type="GO" id="GO:0050518">
    <property type="term" value="F:2-C-methyl-D-erythritol 4-phosphate cytidylyltransferase activity"/>
    <property type="evidence" value="ECO:0007669"/>
    <property type="project" value="UniProtKB-UniRule"/>
</dbReference>
<dbReference type="GO" id="GO:0046872">
    <property type="term" value="F:metal ion binding"/>
    <property type="evidence" value="ECO:0007669"/>
    <property type="project" value="UniProtKB-KW"/>
</dbReference>
<dbReference type="GO" id="GO:0019288">
    <property type="term" value="P:isopentenyl diphosphate biosynthetic process, methylerythritol 4-phosphate pathway"/>
    <property type="evidence" value="ECO:0007669"/>
    <property type="project" value="UniProtKB-UniRule"/>
</dbReference>
<dbReference type="GO" id="GO:0016114">
    <property type="term" value="P:terpenoid biosynthetic process"/>
    <property type="evidence" value="ECO:0007669"/>
    <property type="project" value="InterPro"/>
</dbReference>
<dbReference type="CDD" id="cd02516">
    <property type="entry name" value="CDP-ME_synthetase"/>
    <property type="match status" value="1"/>
</dbReference>
<dbReference type="CDD" id="cd00554">
    <property type="entry name" value="MECDP_synthase"/>
    <property type="match status" value="1"/>
</dbReference>
<dbReference type="FunFam" id="3.90.550.10:FF:000003">
    <property type="entry name" value="2-C-methyl-D-erythritol 4-phosphate cytidylyltransferase"/>
    <property type="match status" value="1"/>
</dbReference>
<dbReference type="Gene3D" id="3.30.1330.50">
    <property type="entry name" value="2-C-methyl-D-erythritol 2,4-cyclodiphosphate synthase"/>
    <property type="match status" value="1"/>
</dbReference>
<dbReference type="Gene3D" id="3.90.550.10">
    <property type="entry name" value="Spore Coat Polysaccharide Biosynthesis Protein SpsA, Chain A"/>
    <property type="match status" value="1"/>
</dbReference>
<dbReference type="HAMAP" id="MF_00108">
    <property type="entry name" value="IspD"/>
    <property type="match status" value="1"/>
</dbReference>
<dbReference type="HAMAP" id="MF_01520">
    <property type="entry name" value="IspDF"/>
    <property type="match status" value="1"/>
</dbReference>
<dbReference type="HAMAP" id="MF_00107">
    <property type="entry name" value="IspF"/>
    <property type="match status" value="1"/>
</dbReference>
<dbReference type="InterPro" id="IPR001228">
    <property type="entry name" value="IspD"/>
</dbReference>
<dbReference type="InterPro" id="IPR026596">
    <property type="entry name" value="IspD/F"/>
</dbReference>
<dbReference type="InterPro" id="IPR034683">
    <property type="entry name" value="IspD/TarI"/>
</dbReference>
<dbReference type="InterPro" id="IPR018294">
    <property type="entry name" value="ISPD_synthase_CS"/>
</dbReference>
<dbReference type="InterPro" id="IPR003526">
    <property type="entry name" value="MECDP_synthase"/>
</dbReference>
<dbReference type="InterPro" id="IPR020555">
    <property type="entry name" value="MECDP_synthase_CS"/>
</dbReference>
<dbReference type="InterPro" id="IPR036571">
    <property type="entry name" value="MECDP_synthase_sf"/>
</dbReference>
<dbReference type="InterPro" id="IPR029044">
    <property type="entry name" value="Nucleotide-diphossugar_trans"/>
</dbReference>
<dbReference type="NCBIfam" id="TIGR00453">
    <property type="entry name" value="ispD"/>
    <property type="match status" value="1"/>
</dbReference>
<dbReference type="NCBIfam" id="TIGR00151">
    <property type="entry name" value="ispF"/>
    <property type="match status" value="1"/>
</dbReference>
<dbReference type="PANTHER" id="PTHR43181">
    <property type="entry name" value="2-C-METHYL-D-ERYTHRITOL 2,4-CYCLODIPHOSPHATE SYNTHASE, CHLOROPLASTIC"/>
    <property type="match status" value="1"/>
</dbReference>
<dbReference type="PANTHER" id="PTHR43181:SF1">
    <property type="entry name" value="2-C-METHYL-D-ERYTHRITOL 2,4-CYCLODIPHOSPHATE SYNTHASE, CHLOROPLASTIC"/>
    <property type="match status" value="1"/>
</dbReference>
<dbReference type="Pfam" id="PF01128">
    <property type="entry name" value="IspD"/>
    <property type="match status" value="1"/>
</dbReference>
<dbReference type="Pfam" id="PF02542">
    <property type="entry name" value="YgbB"/>
    <property type="match status" value="1"/>
</dbReference>
<dbReference type="SUPFAM" id="SSF69765">
    <property type="entry name" value="IpsF-like"/>
    <property type="match status" value="1"/>
</dbReference>
<dbReference type="SUPFAM" id="SSF53448">
    <property type="entry name" value="Nucleotide-diphospho-sugar transferases"/>
    <property type="match status" value="1"/>
</dbReference>
<dbReference type="PROSITE" id="PS01295">
    <property type="entry name" value="ISPD"/>
    <property type="match status" value="1"/>
</dbReference>
<dbReference type="PROSITE" id="PS01350">
    <property type="entry name" value="ISPF"/>
    <property type="match status" value="1"/>
</dbReference>
<sequence>MADTLAIVVAAGRSSRMGEGPKKQYRLLAGRPVLGRTLEVFEHAPAVDGVVLVVAPGEEDWCREEIVTRFGFTKVVAVVPGGEVRRDSVWAGLQALPPCALVLVHDGVRPFVTARQIAAVAEAARECGAATLAVPPKDTVKLGGPPGAPVSTLPRENLWLVQTPQAFRFDVLIKAHHLARERGLAATDDTSLAEAAGYDVRMVPGAYTNIKITTPEDLAFAEALLGGGPVLVGFGYDVHRLVDDRKLILGGVEVPHDRGLLGHSDADVLVHAVMDALLGAAGAGDIGRWFPDDDPTYRGISSMDLLVRVAAFLRERGLETSNLDAVVVAEAPRLSPFISRMRDNLASVLGVSPAAVNVKATTTEGLGFTGSGAGIAAYAVAALRRIVLPGDRVL</sequence>
<keyword id="KW-0414">Isoprene biosynthesis</keyword>
<keyword id="KW-0456">Lyase</keyword>
<keyword id="KW-0479">Metal-binding</keyword>
<keyword id="KW-0511">Multifunctional enzyme</keyword>
<keyword id="KW-0548">Nucleotidyltransferase</keyword>
<keyword id="KW-1185">Reference proteome</keyword>
<keyword id="KW-0808">Transferase</keyword>
<evidence type="ECO:0000255" key="1">
    <source>
        <dbReference type="HAMAP-Rule" id="MF_01520"/>
    </source>
</evidence>
<comment type="function">
    <text evidence="1">Bifunctional enzyme that catalyzes the formation of 4-diphosphocytidyl-2-C-methyl-D-erythritol from CTP and 2-C-methyl-D-erythritol 4-phosphate (MEP) (IspD), and catalyzes the conversion of 4-diphosphocytidyl-2-C-methyl-D-erythritol 2-phosphate (CDP-ME2P) to 2-C-methyl-D-erythritol 2,4-cyclodiphosphate (ME-CPP) with a corresponding release of cytidine 5-monophosphate (CMP) (IspF).</text>
</comment>
<comment type="catalytic activity">
    <reaction evidence="1">
        <text>2-C-methyl-D-erythritol 4-phosphate + CTP + H(+) = 4-CDP-2-C-methyl-D-erythritol + diphosphate</text>
        <dbReference type="Rhea" id="RHEA:13429"/>
        <dbReference type="ChEBI" id="CHEBI:15378"/>
        <dbReference type="ChEBI" id="CHEBI:33019"/>
        <dbReference type="ChEBI" id="CHEBI:37563"/>
        <dbReference type="ChEBI" id="CHEBI:57823"/>
        <dbReference type="ChEBI" id="CHEBI:58262"/>
        <dbReference type="EC" id="2.7.7.60"/>
    </reaction>
</comment>
<comment type="catalytic activity">
    <reaction evidence="1">
        <text>4-CDP-2-C-methyl-D-erythritol 2-phosphate = 2-C-methyl-D-erythritol 2,4-cyclic diphosphate + CMP</text>
        <dbReference type="Rhea" id="RHEA:23864"/>
        <dbReference type="ChEBI" id="CHEBI:57919"/>
        <dbReference type="ChEBI" id="CHEBI:58483"/>
        <dbReference type="ChEBI" id="CHEBI:60377"/>
        <dbReference type="EC" id="4.6.1.12"/>
    </reaction>
</comment>
<comment type="cofactor">
    <cofactor evidence="1">
        <name>a divalent metal cation</name>
        <dbReference type="ChEBI" id="CHEBI:60240"/>
    </cofactor>
</comment>
<comment type="pathway">
    <text evidence="1">Isoprenoid biosynthesis; isopentenyl diphosphate biosynthesis via DXP pathway; isopentenyl diphosphate from 1-deoxy-D-xylulose 5-phosphate: step 2/6.</text>
</comment>
<comment type="pathway">
    <text evidence="1">Isoprenoid biosynthesis; isopentenyl diphosphate biosynthesis via DXP pathway; isopentenyl diphosphate from 1-deoxy-D-xylulose 5-phosphate: step 4/6.</text>
</comment>
<comment type="similarity">
    <text evidence="1">In the N-terminal section; belongs to the IspD/TarI cytidylyltransferase family. IspD subfamily.</text>
</comment>
<comment type="similarity">
    <text evidence="1">In the C-terminal section; belongs to the IspF family.</text>
</comment>
<feature type="chain" id="PRO_1000146271" description="Bifunctional enzyme IspD/IspF">
    <location>
        <begin position="1"/>
        <end position="394"/>
    </location>
</feature>
<feature type="region of interest" description="2-C-methyl-D-erythritol 4-phosphate cytidylyltransferase" evidence="1">
    <location>
        <begin position="1"/>
        <end position="230"/>
    </location>
</feature>
<feature type="region of interest" description="2-C-methyl-D-erythritol 2,4-cyclodiphosphate synthase" evidence="1">
    <location>
        <begin position="231"/>
        <end position="394"/>
    </location>
</feature>
<feature type="binding site" evidence="1">
    <location>
        <begin position="237"/>
        <end position="239"/>
    </location>
    <ligand>
        <name>4-CDP-2-C-methyl-D-erythritol 2-phosphate</name>
        <dbReference type="ChEBI" id="CHEBI:57919"/>
    </ligand>
</feature>
<feature type="binding site" evidence="1">
    <location>
        <position position="237"/>
    </location>
    <ligand>
        <name>a divalent metal cation</name>
        <dbReference type="ChEBI" id="CHEBI:60240"/>
    </ligand>
</feature>
<feature type="binding site" evidence="1">
    <location>
        <position position="239"/>
    </location>
    <ligand>
        <name>a divalent metal cation</name>
        <dbReference type="ChEBI" id="CHEBI:60240"/>
    </ligand>
</feature>
<feature type="binding site" evidence="1">
    <location>
        <begin position="263"/>
        <end position="264"/>
    </location>
    <ligand>
        <name>4-CDP-2-C-methyl-D-erythritol 2-phosphate</name>
        <dbReference type="ChEBI" id="CHEBI:57919"/>
    </ligand>
</feature>
<feature type="binding site" evidence="1">
    <location>
        <position position="271"/>
    </location>
    <ligand>
        <name>a divalent metal cation</name>
        <dbReference type="ChEBI" id="CHEBI:60240"/>
    </ligand>
</feature>
<feature type="binding site" evidence="1">
    <location>
        <begin position="285"/>
        <end position="287"/>
    </location>
    <ligand>
        <name>4-CDP-2-C-methyl-D-erythritol 2-phosphate</name>
        <dbReference type="ChEBI" id="CHEBI:57919"/>
    </ligand>
</feature>
<feature type="binding site" evidence="1">
    <location>
        <begin position="290"/>
        <end position="294"/>
    </location>
    <ligand>
        <name>4-CDP-2-C-methyl-D-erythritol 2-phosphate</name>
        <dbReference type="ChEBI" id="CHEBI:57919"/>
    </ligand>
</feature>
<feature type="binding site" evidence="1">
    <location>
        <begin position="361"/>
        <end position="364"/>
    </location>
    <ligand>
        <name>4-CDP-2-C-methyl-D-erythritol 2-phosphate</name>
        <dbReference type="ChEBI" id="CHEBI:57919"/>
    </ligand>
</feature>
<feature type="binding site" evidence="1">
    <location>
        <position position="368"/>
    </location>
    <ligand>
        <name>4-CDP-2-C-methyl-D-erythritol 2-phosphate</name>
        <dbReference type="ChEBI" id="CHEBI:57919"/>
    </ligand>
</feature>
<feature type="site" description="Transition state stabilizer" evidence="1">
    <location>
        <position position="16"/>
    </location>
</feature>
<feature type="site" description="Transition state stabilizer" evidence="1">
    <location>
        <position position="23"/>
    </location>
</feature>
<feature type="site" description="Positions MEP for the nucleophilic attack" evidence="1">
    <location>
        <position position="155"/>
    </location>
</feature>
<feature type="site" description="Positions MEP for the nucleophilic attack" evidence="1">
    <location>
        <position position="211"/>
    </location>
</feature>
<feature type="site" description="Transition state stabilizer" evidence="1">
    <location>
        <position position="263"/>
    </location>
</feature>
<feature type="site" description="Transition state stabilizer" evidence="1">
    <location>
        <position position="362"/>
    </location>
</feature>
<protein>
    <recommendedName>
        <fullName evidence="1">Bifunctional enzyme IspD/IspF</fullName>
    </recommendedName>
    <domain>
        <recommendedName>
            <fullName evidence="1">2-C-methyl-D-erythritol 4-phosphate cytidylyltransferase</fullName>
            <ecNumber evidence="1">2.7.7.60</ecNumber>
        </recommendedName>
        <alternativeName>
            <fullName evidence="1">4-diphosphocytidyl-2C-methyl-D-erythritol synthase</fullName>
        </alternativeName>
        <alternativeName>
            <fullName evidence="1">MEP cytidylyltransferase</fullName>
            <shortName evidence="1">MCT</shortName>
        </alternativeName>
    </domain>
    <domain>
        <recommendedName>
            <fullName evidence="1">2-C-methyl-D-erythritol 2,4-cyclodiphosphate synthase</fullName>
            <shortName evidence="1">MECDP-synthase</shortName>
            <shortName evidence="1">MECPP-synthase</shortName>
            <shortName evidence="1">MECPS</shortName>
            <ecNumber evidence="1">4.6.1.12</ecNumber>
        </recommendedName>
    </domain>
</protein>
<gene>
    <name evidence="1" type="primary">ispDF</name>
    <name type="ordered locus">Daud_0186</name>
</gene>
<name>ISPDF_DESAP</name>
<organism>
    <name type="scientific">Desulforudis audaxviator (strain MP104C)</name>
    <dbReference type="NCBI Taxonomy" id="477974"/>
    <lineage>
        <taxon>Bacteria</taxon>
        <taxon>Bacillati</taxon>
        <taxon>Bacillota</taxon>
        <taxon>Clostridia</taxon>
        <taxon>Thermoanaerobacterales</taxon>
        <taxon>Candidatus Desulforudaceae</taxon>
        <taxon>Candidatus Desulforudis</taxon>
    </lineage>
</organism>
<proteinExistence type="inferred from homology"/>
<accession>B1I0S9</accession>